<evidence type="ECO:0000255" key="1">
    <source>
        <dbReference type="HAMAP-Rule" id="MF_01371"/>
    </source>
</evidence>
<evidence type="ECO:0000305" key="2"/>
<reference key="1">
    <citation type="submission" date="2007-12" db="EMBL/GenBank/DDBJ databases">
        <title>Complete sequence of chromosome of Francisella philomiragia subsp. philomiragia ATCC 25017.</title>
        <authorList>
            <consortium name="US DOE Joint Genome Institute"/>
            <person name="Copeland A."/>
            <person name="Lucas S."/>
            <person name="Lapidus A."/>
            <person name="Barry K."/>
            <person name="Detter J.C."/>
            <person name="Glavina del Rio T."/>
            <person name="Hammon N."/>
            <person name="Israni S."/>
            <person name="Dalin E."/>
            <person name="Tice H."/>
            <person name="Pitluck S."/>
            <person name="Chain P."/>
            <person name="Malfatti S."/>
            <person name="Shin M."/>
            <person name="Vergez L."/>
            <person name="Schmutz J."/>
            <person name="Larimer F."/>
            <person name="Land M."/>
            <person name="Hauser L."/>
            <person name="Richardson P."/>
        </authorList>
    </citation>
    <scope>NUCLEOTIDE SEQUENCE [LARGE SCALE GENOMIC DNA]</scope>
    <source>
        <strain>ATCC 25017 / CCUG 19701 / FSC 153 / O#319-036</strain>
    </source>
</reference>
<sequence>MTQAKTFKVTLTKSLIGRKENHIASARGLGLRKINHTVEVLDTPENRGMANKIYYMVKIEG</sequence>
<feature type="chain" id="PRO_1000087252" description="Large ribosomal subunit protein uL30">
    <location>
        <begin position="1"/>
        <end position="61"/>
    </location>
</feature>
<dbReference type="EMBL" id="CP000937">
    <property type="protein sequence ID" value="ABZ86787.1"/>
    <property type="molecule type" value="Genomic_DNA"/>
</dbReference>
<dbReference type="SMR" id="B0U0X1"/>
<dbReference type="KEGG" id="fph:Fphi_0569"/>
<dbReference type="eggNOG" id="COG1841">
    <property type="taxonomic scope" value="Bacteria"/>
</dbReference>
<dbReference type="HOGENOM" id="CLU_131047_1_4_6"/>
<dbReference type="GO" id="GO:0022625">
    <property type="term" value="C:cytosolic large ribosomal subunit"/>
    <property type="evidence" value="ECO:0007669"/>
    <property type="project" value="TreeGrafter"/>
</dbReference>
<dbReference type="GO" id="GO:0003735">
    <property type="term" value="F:structural constituent of ribosome"/>
    <property type="evidence" value="ECO:0007669"/>
    <property type="project" value="InterPro"/>
</dbReference>
<dbReference type="GO" id="GO:0006412">
    <property type="term" value="P:translation"/>
    <property type="evidence" value="ECO:0007669"/>
    <property type="project" value="UniProtKB-UniRule"/>
</dbReference>
<dbReference type="CDD" id="cd01658">
    <property type="entry name" value="Ribosomal_L30"/>
    <property type="match status" value="1"/>
</dbReference>
<dbReference type="FunFam" id="3.30.1390.20:FF:000001">
    <property type="entry name" value="50S ribosomal protein L30"/>
    <property type="match status" value="1"/>
</dbReference>
<dbReference type="Gene3D" id="3.30.1390.20">
    <property type="entry name" value="Ribosomal protein L30, ferredoxin-like fold domain"/>
    <property type="match status" value="1"/>
</dbReference>
<dbReference type="HAMAP" id="MF_01371_B">
    <property type="entry name" value="Ribosomal_uL30_B"/>
    <property type="match status" value="1"/>
</dbReference>
<dbReference type="InterPro" id="IPR036919">
    <property type="entry name" value="Ribo_uL30_ferredoxin-like_sf"/>
</dbReference>
<dbReference type="InterPro" id="IPR005996">
    <property type="entry name" value="Ribosomal_uL30_bac-type"/>
</dbReference>
<dbReference type="InterPro" id="IPR016082">
    <property type="entry name" value="Ribosomal_uL30_ferredoxin-like"/>
</dbReference>
<dbReference type="NCBIfam" id="TIGR01308">
    <property type="entry name" value="rpmD_bact"/>
    <property type="match status" value="1"/>
</dbReference>
<dbReference type="PANTHER" id="PTHR15892:SF2">
    <property type="entry name" value="LARGE RIBOSOMAL SUBUNIT PROTEIN UL30M"/>
    <property type="match status" value="1"/>
</dbReference>
<dbReference type="PANTHER" id="PTHR15892">
    <property type="entry name" value="MITOCHONDRIAL RIBOSOMAL PROTEIN L30"/>
    <property type="match status" value="1"/>
</dbReference>
<dbReference type="Pfam" id="PF00327">
    <property type="entry name" value="Ribosomal_L30"/>
    <property type="match status" value="1"/>
</dbReference>
<dbReference type="PIRSF" id="PIRSF002211">
    <property type="entry name" value="Ribosomal_L30_bac-type"/>
    <property type="match status" value="1"/>
</dbReference>
<dbReference type="SUPFAM" id="SSF55129">
    <property type="entry name" value="Ribosomal protein L30p/L7e"/>
    <property type="match status" value="1"/>
</dbReference>
<protein>
    <recommendedName>
        <fullName evidence="1">Large ribosomal subunit protein uL30</fullName>
    </recommendedName>
    <alternativeName>
        <fullName evidence="2">50S ribosomal protein L30</fullName>
    </alternativeName>
</protein>
<gene>
    <name evidence="1" type="primary">rpmD</name>
    <name type="ordered locus">Fphi_0569</name>
</gene>
<comment type="subunit">
    <text evidence="1">Part of the 50S ribosomal subunit.</text>
</comment>
<comment type="similarity">
    <text evidence="1">Belongs to the universal ribosomal protein uL30 family.</text>
</comment>
<proteinExistence type="inferred from homology"/>
<organism>
    <name type="scientific">Francisella philomiragia subsp. philomiragia (strain ATCC 25017 / CCUG 19701 / FSC 153 / O#319-036)</name>
    <dbReference type="NCBI Taxonomy" id="484022"/>
    <lineage>
        <taxon>Bacteria</taxon>
        <taxon>Pseudomonadati</taxon>
        <taxon>Pseudomonadota</taxon>
        <taxon>Gammaproteobacteria</taxon>
        <taxon>Thiotrichales</taxon>
        <taxon>Francisellaceae</taxon>
        <taxon>Francisella</taxon>
    </lineage>
</organism>
<keyword id="KW-0687">Ribonucleoprotein</keyword>
<keyword id="KW-0689">Ribosomal protein</keyword>
<accession>B0U0X1</accession>
<name>RL30_FRAP2</name>